<protein>
    <recommendedName>
        <fullName evidence="1">Polyribonucleotide nucleotidyltransferase</fullName>
        <ecNumber evidence="1">2.7.7.8</ecNumber>
    </recommendedName>
    <alternativeName>
        <fullName evidence="1">Polynucleotide phosphorylase</fullName>
        <shortName evidence="1">PNPase</shortName>
    </alternativeName>
</protein>
<accession>A4TCH6</accession>
<organism>
    <name type="scientific">Mycolicibacterium gilvum (strain PYR-GCK)</name>
    <name type="common">Mycobacterium gilvum (strain PYR-GCK)</name>
    <dbReference type="NCBI Taxonomy" id="350054"/>
    <lineage>
        <taxon>Bacteria</taxon>
        <taxon>Bacillati</taxon>
        <taxon>Actinomycetota</taxon>
        <taxon>Actinomycetes</taxon>
        <taxon>Mycobacteriales</taxon>
        <taxon>Mycobacteriaceae</taxon>
        <taxon>Mycolicibacterium</taxon>
    </lineage>
</organism>
<proteinExistence type="inferred from homology"/>
<reference key="1">
    <citation type="submission" date="2007-04" db="EMBL/GenBank/DDBJ databases">
        <title>Complete sequence of chromosome of Mycobacterium gilvum PYR-GCK.</title>
        <authorList>
            <consortium name="US DOE Joint Genome Institute"/>
            <person name="Copeland A."/>
            <person name="Lucas S."/>
            <person name="Lapidus A."/>
            <person name="Barry K."/>
            <person name="Detter J.C."/>
            <person name="Glavina del Rio T."/>
            <person name="Hammon N."/>
            <person name="Israni S."/>
            <person name="Dalin E."/>
            <person name="Tice H."/>
            <person name="Pitluck S."/>
            <person name="Chain P."/>
            <person name="Malfatti S."/>
            <person name="Shin M."/>
            <person name="Vergez L."/>
            <person name="Schmutz J."/>
            <person name="Larimer F."/>
            <person name="Land M."/>
            <person name="Hauser L."/>
            <person name="Kyrpides N."/>
            <person name="Mikhailova N."/>
            <person name="Miller C."/>
            <person name="Richardson P."/>
        </authorList>
    </citation>
    <scope>NUCLEOTIDE SEQUENCE [LARGE SCALE GENOMIC DNA]</scope>
    <source>
        <strain>PYR-GCK</strain>
    </source>
</reference>
<gene>
    <name evidence="1" type="primary">pnp</name>
    <name type="ordered locus">Mflv_4023</name>
</gene>
<keyword id="KW-0963">Cytoplasm</keyword>
<keyword id="KW-0460">Magnesium</keyword>
<keyword id="KW-0479">Metal-binding</keyword>
<keyword id="KW-0548">Nucleotidyltransferase</keyword>
<keyword id="KW-0694">RNA-binding</keyword>
<keyword id="KW-0808">Transferase</keyword>
<feature type="chain" id="PRO_1000087993" description="Polyribonucleotide nucleotidyltransferase">
    <location>
        <begin position="1"/>
        <end position="756"/>
    </location>
</feature>
<feature type="domain" description="KH" evidence="1">
    <location>
        <begin position="593"/>
        <end position="652"/>
    </location>
</feature>
<feature type="domain" description="S1 motif" evidence="1">
    <location>
        <begin position="664"/>
        <end position="733"/>
    </location>
</feature>
<feature type="binding site" evidence="1">
    <location>
        <position position="527"/>
    </location>
    <ligand>
        <name>Mg(2+)</name>
        <dbReference type="ChEBI" id="CHEBI:18420"/>
    </ligand>
</feature>
<feature type="binding site" evidence="1">
    <location>
        <position position="533"/>
    </location>
    <ligand>
        <name>Mg(2+)</name>
        <dbReference type="ChEBI" id="CHEBI:18420"/>
    </ligand>
</feature>
<dbReference type="EC" id="2.7.7.8" evidence="1"/>
<dbReference type="EMBL" id="CP000656">
    <property type="protein sequence ID" value="ABP46493.1"/>
    <property type="molecule type" value="Genomic_DNA"/>
</dbReference>
<dbReference type="SMR" id="A4TCH6"/>
<dbReference type="STRING" id="350054.Mflv_4023"/>
<dbReference type="KEGG" id="mgi:Mflv_4023"/>
<dbReference type="eggNOG" id="COG1185">
    <property type="taxonomic scope" value="Bacteria"/>
</dbReference>
<dbReference type="HOGENOM" id="CLU_004217_2_2_11"/>
<dbReference type="OrthoDB" id="9804305at2"/>
<dbReference type="GO" id="GO:0005829">
    <property type="term" value="C:cytosol"/>
    <property type="evidence" value="ECO:0007669"/>
    <property type="project" value="TreeGrafter"/>
</dbReference>
<dbReference type="GO" id="GO:0000175">
    <property type="term" value="F:3'-5'-RNA exonuclease activity"/>
    <property type="evidence" value="ECO:0007669"/>
    <property type="project" value="TreeGrafter"/>
</dbReference>
<dbReference type="GO" id="GO:0000287">
    <property type="term" value="F:magnesium ion binding"/>
    <property type="evidence" value="ECO:0007669"/>
    <property type="project" value="UniProtKB-UniRule"/>
</dbReference>
<dbReference type="GO" id="GO:0004654">
    <property type="term" value="F:polyribonucleotide nucleotidyltransferase activity"/>
    <property type="evidence" value="ECO:0007669"/>
    <property type="project" value="UniProtKB-UniRule"/>
</dbReference>
<dbReference type="GO" id="GO:0003723">
    <property type="term" value="F:RNA binding"/>
    <property type="evidence" value="ECO:0007669"/>
    <property type="project" value="UniProtKB-UniRule"/>
</dbReference>
<dbReference type="GO" id="GO:0006402">
    <property type="term" value="P:mRNA catabolic process"/>
    <property type="evidence" value="ECO:0007669"/>
    <property type="project" value="UniProtKB-UniRule"/>
</dbReference>
<dbReference type="GO" id="GO:0006396">
    <property type="term" value="P:RNA processing"/>
    <property type="evidence" value="ECO:0007669"/>
    <property type="project" value="InterPro"/>
</dbReference>
<dbReference type="CDD" id="cd02393">
    <property type="entry name" value="KH-I_PNPase"/>
    <property type="match status" value="1"/>
</dbReference>
<dbReference type="CDD" id="cd11364">
    <property type="entry name" value="RNase_PH_PNPase_2"/>
    <property type="match status" value="1"/>
</dbReference>
<dbReference type="CDD" id="cd04472">
    <property type="entry name" value="S1_PNPase"/>
    <property type="match status" value="1"/>
</dbReference>
<dbReference type="FunFam" id="2.40.50.140:FF:000069">
    <property type="entry name" value="Polyribonucleotide nucleotidyltransferase"/>
    <property type="match status" value="1"/>
</dbReference>
<dbReference type="FunFam" id="3.30.1370.10:FF:000001">
    <property type="entry name" value="Polyribonucleotide nucleotidyltransferase"/>
    <property type="match status" value="1"/>
</dbReference>
<dbReference type="FunFam" id="3.30.230.70:FF:000001">
    <property type="entry name" value="Polyribonucleotide nucleotidyltransferase"/>
    <property type="match status" value="1"/>
</dbReference>
<dbReference type="FunFam" id="3.30.230.70:FF:000002">
    <property type="entry name" value="Polyribonucleotide nucleotidyltransferase"/>
    <property type="match status" value="1"/>
</dbReference>
<dbReference type="Gene3D" id="3.30.230.70">
    <property type="entry name" value="GHMP Kinase, N-terminal domain"/>
    <property type="match status" value="2"/>
</dbReference>
<dbReference type="Gene3D" id="3.30.1370.10">
    <property type="entry name" value="K Homology domain, type 1"/>
    <property type="match status" value="1"/>
</dbReference>
<dbReference type="Gene3D" id="2.40.50.140">
    <property type="entry name" value="Nucleic acid-binding proteins"/>
    <property type="match status" value="1"/>
</dbReference>
<dbReference type="HAMAP" id="MF_01595">
    <property type="entry name" value="PNPase"/>
    <property type="match status" value="1"/>
</dbReference>
<dbReference type="InterPro" id="IPR001247">
    <property type="entry name" value="ExoRNase_PH_dom1"/>
</dbReference>
<dbReference type="InterPro" id="IPR015847">
    <property type="entry name" value="ExoRNase_PH_dom2"/>
</dbReference>
<dbReference type="InterPro" id="IPR036345">
    <property type="entry name" value="ExoRNase_PH_dom2_sf"/>
</dbReference>
<dbReference type="InterPro" id="IPR014069">
    <property type="entry name" value="GPSI/PNP"/>
</dbReference>
<dbReference type="InterPro" id="IPR004087">
    <property type="entry name" value="KH_dom"/>
</dbReference>
<dbReference type="InterPro" id="IPR004088">
    <property type="entry name" value="KH_dom_type_1"/>
</dbReference>
<dbReference type="InterPro" id="IPR036612">
    <property type="entry name" value="KH_dom_type_1_sf"/>
</dbReference>
<dbReference type="InterPro" id="IPR012340">
    <property type="entry name" value="NA-bd_OB-fold"/>
</dbReference>
<dbReference type="InterPro" id="IPR012162">
    <property type="entry name" value="PNPase"/>
</dbReference>
<dbReference type="InterPro" id="IPR027408">
    <property type="entry name" value="PNPase/RNase_PH_dom_sf"/>
</dbReference>
<dbReference type="InterPro" id="IPR015848">
    <property type="entry name" value="PNPase_PH_RNA-bd_bac/org-type"/>
</dbReference>
<dbReference type="InterPro" id="IPR036456">
    <property type="entry name" value="PNPase_PH_RNA-bd_sf"/>
</dbReference>
<dbReference type="InterPro" id="IPR020568">
    <property type="entry name" value="Ribosomal_Su5_D2-typ_SF"/>
</dbReference>
<dbReference type="InterPro" id="IPR003029">
    <property type="entry name" value="S1_domain"/>
</dbReference>
<dbReference type="NCBIfam" id="TIGR03591">
    <property type="entry name" value="polynuc_phos"/>
    <property type="match status" value="1"/>
</dbReference>
<dbReference type="NCBIfam" id="TIGR02696">
    <property type="entry name" value="pppGpp_PNP"/>
    <property type="match status" value="1"/>
</dbReference>
<dbReference type="NCBIfam" id="NF008805">
    <property type="entry name" value="PRK11824.1"/>
    <property type="match status" value="1"/>
</dbReference>
<dbReference type="PANTHER" id="PTHR11252">
    <property type="entry name" value="POLYRIBONUCLEOTIDE NUCLEOTIDYLTRANSFERASE"/>
    <property type="match status" value="1"/>
</dbReference>
<dbReference type="PANTHER" id="PTHR11252:SF0">
    <property type="entry name" value="POLYRIBONUCLEOTIDE NUCLEOTIDYLTRANSFERASE 1, MITOCHONDRIAL"/>
    <property type="match status" value="1"/>
</dbReference>
<dbReference type="Pfam" id="PF00013">
    <property type="entry name" value="KH_1"/>
    <property type="match status" value="1"/>
</dbReference>
<dbReference type="Pfam" id="PF03726">
    <property type="entry name" value="PNPase"/>
    <property type="match status" value="1"/>
</dbReference>
<dbReference type="Pfam" id="PF01138">
    <property type="entry name" value="RNase_PH"/>
    <property type="match status" value="2"/>
</dbReference>
<dbReference type="Pfam" id="PF03725">
    <property type="entry name" value="RNase_PH_C"/>
    <property type="match status" value="1"/>
</dbReference>
<dbReference type="Pfam" id="PF00575">
    <property type="entry name" value="S1"/>
    <property type="match status" value="1"/>
</dbReference>
<dbReference type="PIRSF" id="PIRSF005499">
    <property type="entry name" value="PNPase"/>
    <property type="match status" value="1"/>
</dbReference>
<dbReference type="SMART" id="SM00322">
    <property type="entry name" value="KH"/>
    <property type="match status" value="1"/>
</dbReference>
<dbReference type="SMART" id="SM00316">
    <property type="entry name" value="S1"/>
    <property type="match status" value="1"/>
</dbReference>
<dbReference type="SUPFAM" id="SSF54791">
    <property type="entry name" value="Eukaryotic type KH-domain (KH-domain type I)"/>
    <property type="match status" value="1"/>
</dbReference>
<dbReference type="SUPFAM" id="SSF50249">
    <property type="entry name" value="Nucleic acid-binding proteins"/>
    <property type="match status" value="1"/>
</dbReference>
<dbReference type="SUPFAM" id="SSF46915">
    <property type="entry name" value="Polynucleotide phosphorylase/guanosine pentaphosphate synthase (PNPase/GPSI), domain 3"/>
    <property type="match status" value="1"/>
</dbReference>
<dbReference type="SUPFAM" id="SSF55666">
    <property type="entry name" value="Ribonuclease PH domain 2-like"/>
    <property type="match status" value="2"/>
</dbReference>
<dbReference type="SUPFAM" id="SSF54211">
    <property type="entry name" value="Ribosomal protein S5 domain 2-like"/>
    <property type="match status" value="2"/>
</dbReference>
<dbReference type="PROSITE" id="PS50084">
    <property type="entry name" value="KH_TYPE_1"/>
    <property type="match status" value="1"/>
</dbReference>
<dbReference type="PROSITE" id="PS50126">
    <property type="entry name" value="S1"/>
    <property type="match status" value="1"/>
</dbReference>
<name>PNP_MYCGI</name>
<comment type="function">
    <text evidence="1">Involved in mRNA degradation. Catalyzes the phosphorolysis of single-stranded polyribonucleotides processively in the 3'- to 5'-direction.</text>
</comment>
<comment type="catalytic activity">
    <reaction evidence="1">
        <text>RNA(n+1) + phosphate = RNA(n) + a ribonucleoside 5'-diphosphate</text>
        <dbReference type="Rhea" id="RHEA:22096"/>
        <dbReference type="Rhea" id="RHEA-COMP:14527"/>
        <dbReference type="Rhea" id="RHEA-COMP:17342"/>
        <dbReference type="ChEBI" id="CHEBI:43474"/>
        <dbReference type="ChEBI" id="CHEBI:57930"/>
        <dbReference type="ChEBI" id="CHEBI:140395"/>
        <dbReference type="EC" id="2.7.7.8"/>
    </reaction>
</comment>
<comment type="cofactor">
    <cofactor evidence="1">
        <name>Mg(2+)</name>
        <dbReference type="ChEBI" id="CHEBI:18420"/>
    </cofactor>
</comment>
<comment type="subcellular location">
    <subcellularLocation>
        <location evidence="1">Cytoplasm</location>
    </subcellularLocation>
</comment>
<comment type="similarity">
    <text evidence="1">Belongs to the polyribonucleotide nucleotidyltransferase family.</text>
</comment>
<sequence length="756" mass="80174">MSVVEIEEGVFESTATIDNGSFGTRTIRFETGRLARQAAGAVVAYLDDETMLLSATTASKQPKEHFDFFPLTIDVEERMYAAGRIPGSFFRREGRPSTDAILTCRLIDRPLRPTFISGLRNEIQVVVTVLSLDPKDLYDVLAINAASASTQISGIPFNGPVGGVRVALIDGQWVAFPTVEQLEKAVFDMVVAGRKVGDAGNEDVAIMMVEAEATDKVIELVAGGAGAPTEAVVAEGLEAAKPFIAALCDAQAALAGAAGKETAEYPVFPDYAEDVYYSVASVATDALSEALTIAGKEARDDRTNEIKAEVVERLAEQYAGREKEIGAAYRSLTKKLVRQRILTDHFRIDGRGVTDIRALSAEVAVIPRAHGSALFERGETQIMGVTTLDMVKMAQQIDSLGPETSKRYMHHYNFPPYSTGETGRVGSPKRREIGHGALAERALMPVLPSVEEFPYAIRQVSEALSSNGSTSMGSVCASTLSLLNAGVPLKAPVAGIAMGLVSDDVEVEGGGVERRFVTLTDILGAEDAFGDMDFKCAGTKDFVTALQLDTKLDGIPSQVLAGALAQAKDARITILEVMAEAIDEPDEMSPYAPRITTIKVPVDKIGEVIGPKGKMINSITEETGASISIEDDGTVFVGASNGEAAQAAIDKINAIANPQLPKVGERFLGTVVKTTDFGAFVSLLPGRDGLVHISKLGRGKRINKVEDVAKVGDKLRVEIADIDNRGKISLVLVAEEEAGAATPEAPAPADAATSSS</sequence>
<evidence type="ECO:0000255" key="1">
    <source>
        <dbReference type="HAMAP-Rule" id="MF_01595"/>
    </source>
</evidence>